<gene>
    <name type="primary">grn</name>
    <name type="ORF">G15G9.140</name>
    <name type="ORF">NCU01045</name>
</gene>
<reference key="1">
    <citation type="journal article" date="2003" name="Nucleic Acids Res.">
        <title>What's in the genome of a filamentous fungus? Analysis of the Neurospora genome sequence.</title>
        <authorList>
            <person name="Mannhaupt G."/>
            <person name="Montrone C."/>
            <person name="Haase D."/>
            <person name="Mewes H.-W."/>
            <person name="Aign V."/>
            <person name="Hoheisel J.D."/>
            <person name="Fartmann B."/>
            <person name="Nyakatura G."/>
            <person name="Kempken F."/>
            <person name="Maier J."/>
            <person name="Schulte U."/>
        </authorList>
    </citation>
    <scope>NUCLEOTIDE SEQUENCE [LARGE SCALE GENOMIC DNA]</scope>
    <source>
        <strain>ATCC 24698 / 74-OR23-1A / CBS 708.71 / DSM 1257 / FGSC 987</strain>
    </source>
</reference>
<reference key="2">
    <citation type="journal article" date="2003" name="Nature">
        <title>The genome sequence of the filamentous fungus Neurospora crassa.</title>
        <authorList>
            <person name="Galagan J.E."/>
            <person name="Calvo S.E."/>
            <person name="Borkovich K.A."/>
            <person name="Selker E.U."/>
            <person name="Read N.D."/>
            <person name="Jaffe D.B."/>
            <person name="FitzHugh W."/>
            <person name="Ma L.-J."/>
            <person name="Smirnov S."/>
            <person name="Purcell S."/>
            <person name="Rehman B."/>
            <person name="Elkins T."/>
            <person name="Engels R."/>
            <person name="Wang S."/>
            <person name="Nielsen C.B."/>
            <person name="Butler J."/>
            <person name="Endrizzi M."/>
            <person name="Qui D."/>
            <person name="Ianakiev P."/>
            <person name="Bell-Pedersen D."/>
            <person name="Nelson M.A."/>
            <person name="Werner-Washburne M."/>
            <person name="Selitrennikoff C.P."/>
            <person name="Kinsey J.A."/>
            <person name="Braun E.L."/>
            <person name="Zelter A."/>
            <person name="Schulte U."/>
            <person name="Kothe G.O."/>
            <person name="Jedd G."/>
            <person name="Mewes H.-W."/>
            <person name="Staben C."/>
            <person name="Marcotte E."/>
            <person name="Greenberg D."/>
            <person name="Roy A."/>
            <person name="Foley K."/>
            <person name="Naylor J."/>
            <person name="Stange-Thomann N."/>
            <person name="Barrett R."/>
            <person name="Gnerre S."/>
            <person name="Kamal M."/>
            <person name="Kamvysselis M."/>
            <person name="Mauceli E.W."/>
            <person name="Bielke C."/>
            <person name="Rudd S."/>
            <person name="Frishman D."/>
            <person name="Krystofova S."/>
            <person name="Rasmussen C."/>
            <person name="Metzenberg R.L."/>
            <person name="Perkins D.D."/>
            <person name="Kroken S."/>
            <person name="Cogoni C."/>
            <person name="Macino G."/>
            <person name="Catcheside D.E.A."/>
            <person name="Li W."/>
            <person name="Pratt R.J."/>
            <person name="Osmani S.A."/>
            <person name="DeSouza C.P.C."/>
            <person name="Glass N.L."/>
            <person name="Orbach M.J."/>
            <person name="Berglund J.A."/>
            <person name="Voelker R."/>
            <person name="Yarden O."/>
            <person name="Plamann M."/>
            <person name="Seiler S."/>
            <person name="Dunlap J.C."/>
            <person name="Radford A."/>
            <person name="Aramayo R."/>
            <person name="Natvig D.O."/>
            <person name="Alex L.A."/>
            <person name="Mannhaupt G."/>
            <person name="Ebbole D.J."/>
            <person name="Freitag M."/>
            <person name="Paulsen I."/>
            <person name="Sachs M.S."/>
            <person name="Lander E.S."/>
            <person name="Nusbaum C."/>
            <person name="Birren B.W."/>
        </authorList>
    </citation>
    <scope>NUCLEOTIDE SEQUENCE [LARGE SCALE GENOMIC DNA]</scope>
    <source>
        <strain>ATCC 24698 / 74-OR23-1A / CBS 708.71 / DSM 1257 / FGSC 987</strain>
    </source>
</reference>
<reference key="3">
    <citation type="journal article" date="1988" name="J. Biochem.">
        <title>The amino acid sequence of ribonuclease N1, a guanine-specific ribonuclease from the fungus Neurospora crassa.</title>
        <authorList>
            <person name="Takahashi K."/>
        </authorList>
    </citation>
    <scope>PROTEIN SEQUENCE OF 50-153</scope>
</reference>
<accession>P09646</accession>
<accession>Q1K8C1</accession>
<accession>Q8WZP7</accession>
<accession>V5IL75</accession>
<dbReference type="EC" id="4.6.1.24"/>
<dbReference type="EMBL" id="AL670006">
    <property type="protein sequence ID" value="CAD21301.1"/>
    <property type="molecule type" value="Genomic_DNA"/>
</dbReference>
<dbReference type="EMBL" id="CM002240">
    <property type="protein sequence ID" value="ESA42488.1"/>
    <property type="molecule type" value="Genomic_DNA"/>
</dbReference>
<dbReference type="PIR" id="JT0301">
    <property type="entry name" value="NRNCT1"/>
</dbReference>
<dbReference type="RefSeq" id="XP_011394457.1">
    <property type="nucleotide sequence ID" value="XM_011396155.1"/>
</dbReference>
<dbReference type="SMR" id="P09646"/>
<dbReference type="STRING" id="367110.P09646"/>
<dbReference type="PaxDb" id="5141-EFNCRP00000004227"/>
<dbReference type="EnsemblFungi" id="ESA42488">
    <property type="protein sequence ID" value="ESA42488"/>
    <property type="gene ID" value="NCU01045"/>
</dbReference>
<dbReference type="GeneID" id="3877848"/>
<dbReference type="KEGG" id="ncr:NCU01045"/>
<dbReference type="VEuPathDB" id="FungiDB:NCU01045"/>
<dbReference type="HOGENOM" id="CLU_111658_1_0_1"/>
<dbReference type="InParanoid" id="P09646"/>
<dbReference type="OMA" id="ACAYTCG"/>
<dbReference type="OrthoDB" id="5425539at2759"/>
<dbReference type="BRENDA" id="4.6.1.24">
    <property type="organism ID" value="3627"/>
</dbReference>
<dbReference type="Proteomes" id="UP000001805">
    <property type="component" value="Chromosome 2, Linkage Group V"/>
</dbReference>
<dbReference type="GO" id="GO:0016829">
    <property type="term" value="F:lyase activity"/>
    <property type="evidence" value="ECO:0007669"/>
    <property type="project" value="UniProtKB-KW"/>
</dbReference>
<dbReference type="GO" id="GO:0046589">
    <property type="term" value="F:ribonuclease T1 activity"/>
    <property type="evidence" value="ECO:0007669"/>
    <property type="project" value="UniProtKB-EC"/>
</dbReference>
<dbReference type="GO" id="GO:0003723">
    <property type="term" value="F:RNA binding"/>
    <property type="evidence" value="ECO:0007669"/>
    <property type="project" value="InterPro"/>
</dbReference>
<dbReference type="GO" id="GO:0004521">
    <property type="term" value="F:RNA endonuclease activity"/>
    <property type="evidence" value="ECO:0007669"/>
    <property type="project" value="InterPro"/>
</dbReference>
<dbReference type="CDD" id="cd00606">
    <property type="entry name" value="fungal_RNase"/>
    <property type="match status" value="1"/>
</dbReference>
<dbReference type="Gene3D" id="3.10.450.30">
    <property type="entry name" value="Microbial ribonucleases"/>
    <property type="match status" value="1"/>
</dbReference>
<dbReference type="InterPro" id="IPR000026">
    <property type="entry name" value="N1-like"/>
</dbReference>
<dbReference type="InterPro" id="IPR016191">
    <property type="entry name" value="Ribonuclease/ribotoxin"/>
</dbReference>
<dbReference type="InterPro" id="IPR051386">
    <property type="entry name" value="Ribonuclease_N1/T1"/>
</dbReference>
<dbReference type="InterPro" id="IPR048269">
    <property type="entry name" value="RNase_U2"/>
</dbReference>
<dbReference type="PANTHER" id="PTHR42104">
    <property type="entry name" value="EXTRACELLULAR GUANYL-SPECIFIC RIBONUCLEASE RNTA (AFU_ORTHOLOGUE AFUA_4G03230)"/>
    <property type="match status" value="1"/>
</dbReference>
<dbReference type="PANTHER" id="PTHR42104:SF1">
    <property type="entry name" value="EXTRACELLULAR GUANYL-SPECIFIC RIBONUCLEASE RNTA (AFU_ORTHOLOGUE AFUA_4G03230)"/>
    <property type="match status" value="1"/>
</dbReference>
<dbReference type="Pfam" id="PF00545">
    <property type="entry name" value="Ribonuclease"/>
    <property type="match status" value="1"/>
</dbReference>
<dbReference type="PIRSF" id="PIRSF037430">
    <property type="entry name" value="RNase_U2"/>
    <property type="match status" value="1"/>
</dbReference>
<dbReference type="SUPFAM" id="SSF53933">
    <property type="entry name" value="Microbial ribonucleases"/>
    <property type="match status" value="1"/>
</dbReference>
<protein>
    <recommendedName>
        <fullName>Guanyl-specific ribonuclease N1</fullName>
        <shortName>RNase N1</shortName>
        <ecNumber>4.6.1.24</ecNumber>
    </recommendedName>
</protein>
<organism>
    <name type="scientific">Neurospora crassa (strain ATCC 24698 / 74-OR23-1A / CBS 708.71 / DSM 1257 / FGSC 987)</name>
    <dbReference type="NCBI Taxonomy" id="367110"/>
    <lineage>
        <taxon>Eukaryota</taxon>
        <taxon>Fungi</taxon>
        <taxon>Dikarya</taxon>
        <taxon>Ascomycota</taxon>
        <taxon>Pezizomycotina</taxon>
        <taxon>Sordariomycetes</taxon>
        <taxon>Sordariomycetidae</taxon>
        <taxon>Sordariales</taxon>
        <taxon>Sordariaceae</taxon>
        <taxon>Neurospora</taxon>
    </lineage>
</organism>
<sequence>MVQLLSAFVSLLSVVAVSGAAIPAPAPEAVVDVAPETATIEPTGNFTAQACMYICGSVCYSSSAISAALNKGYSYYEDGATAGSSSYPHRYNNYEGFDFPTAKPWYEFPILSSGRVYTGGSPGADRVIFDSHGNLDMLITHNGASGNNFVACN</sequence>
<proteinExistence type="evidence at protein level"/>
<keyword id="KW-0903">Direct protein sequencing</keyword>
<keyword id="KW-1015">Disulfide bond</keyword>
<keyword id="KW-0255">Endonuclease</keyword>
<keyword id="KW-0378">Hydrolase</keyword>
<keyword id="KW-0456">Lyase</keyword>
<keyword id="KW-0540">Nuclease</keyword>
<keyword id="KW-1185">Reference proteome</keyword>
<keyword id="KW-0732">Signal</keyword>
<comment type="catalytic activity">
    <reaction>
        <text>[RNA] containing guanosine + H2O = an [RNA fragment]-3'-guanosine-3'-phosphate + a 5'-hydroxy-ribonucleotide-3'-[RNA fragment].</text>
        <dbReference type="EC" id="4.6.1.24"/>
    </reaction>
</comment>
<comment type="similarity">
    <text evidence="4">Belongs to the ribonuclease N1/T1 family.</text>
</comment>
<name>RNN1_NEUCR</name>
<evidence type="ECO:0000250" key="1"/>
<evidence type="ECO:0000255" key="2"/>
<evidence type="ECO:0000269" key="3">
    <source>
    </source>
</evidence>
<evidence type="ECO:0000305" key="4"/>
<feature type="signal peptide" evidence="2">
    <location>
        <begin position="1"/>
        <end position="20"/>
    </location>
</feature>
<feature type="propeptide" id="PRO_0000030831" evidence="3">
    <location>
        <begin position="21"/>
        <end position="49"/>
    </location>
</feature>
<feature type="chain" id="PRO_0000030832" description="Guanyl-specific ribonuclease N1">
    <location>
        <begin position="50"/>
        <end position="153"/>
    </location>
</feature>
<feature type="active site" evidence="1">
    <location>
        <position position="89"/>
    </location>
</feature>
<feature type="active site" description="Proton acceptor" evidence="1">
    <location>
        <position position="107"/>
    </location>
</feature>
<feature type="active site" description="Proton donor" evidence="1">
    <location>
        <position position="141"/>
    </location>
</feature>
<feature type="disulfide bond" evidence="3">
    <location>
        <begin position="51"/>
        <end position="59"/>
    </location>
</feature>
<feature type="disulfide bond" evidence="3">
    <location>
        <begin position="55"/>
        <end position="152"/>
    </location>
</feature>